<accession>Q9FKF4</accession>
<comment type="function">
    <text evidence="2 3 4 5 7 10">Involved in chromoplast differentiation. Associated with a cellular process that triggers the differentiation of pro-plastids or other non-colored plastids into chromoplasts for carotenoid accumulation (PubMed:24267591). Is associated with carotenoid accumulation in chromoplasts (PubMed:26224804). Functions as a major regulator of the phytoene synthase PSY1 protein level and activity. Modulates carotenoid biosynthesis by means of post-transcriptional regulation of PSY1 (PubMed:25675505). Modulates carotenoid biosynthesis in part by up-regulating a series of endogenous carotenogenic genes (PubMed:25857664). Regulates cell elongation in the petiole in an eRF1-2-dependent manner (PubMed:34405771). Binds to and represses TCP14 transactivation activity, thus preventing early light-induced proteins (ELIPs, e.g. ELIP1 and ELIP2) expression and delaying chloroplast biogenesis (e.g. lower chlorophyll biosynthesis and slower development of thylakoid membranes) in germinating cotyledons and etiolated seedlings; reduced levels upon illumination combined to TCP14 accumulation derepress chloroplast biogenesis during deetiolation (PubMed:31604812).</text>
</comment>
<comment type="subunit">
    <text evidence="3 5 7 8 10">Interacts with the phytoene synthase PSY1 in chloroplast. Binds to the eukaryotic release factor eRF1-2 (PubMed:34405771). Interacts with the transcription factor TCP14 in the nucleus to repress chloroplast biogenesis in etiolated seedlings (PubMed:31604812). Associates to the E2 ubiquitin-conjugating enzyme UBC19 (PubMed:34405771).</text>
</comment>
<comment type="subcellular location">
    <subcellularLocation>
        <location evidence="3 5 8 13">Plastid</location>
        <location evidence="3 5 8 13">Chloroplast membrane</location>
    </subcellularLocation>
    <subcellularLocation>
        <location evidence="6 8">Nucleus</location>
    </subcellularLocation>
    <subcellularLocation>
        <location evidence="8">Cytoplasm</location>
    </subcellularLocation>
    <text evidence="6 8">First translated in the cytoplasm before being targeted to either chloroplasts or the nucleus, depending on its ubiquitination status (PubMed:34405771). Localizes in the nucleus in etiolated cotyledons (PubMed:26634929).</text>
</comment>
<comment type="induction">
    <text evidence="7">Decreased levels upon illumination, in both nucleus and plastids (PubMed:31604812). Induced by TCP14 (PubMed:31604812).</text>
</comment>
<comment type="PTM">
    <text evidence="8">Ubiquitination at K-58 by UBC19 is essential for nuclear localization.</text>
</comment>
<comment type="disruption phenotype">
    <text evidence="7">Increased expression levels of ELIP1 and ELIP2, especially upon illumination (PubMed:31604812). Reduced cotyledons greening in deetiolated seedlings (PubMed:31604812).</text>
</comment>
<comment type="miscellaneous">
    <text evidence="12">Its sequence is related to the DnaJ family but lacks the J domain. The CR-type-like region is similar to CR-type zinc-fingers.</text>
</comment>
<comment type="similarity">
    <text>Belongs to the orange-like family.</text>
</comment>
<feature type="transit peptide" description="Chloroplast" evidence="1">
    <location>
        <begin position="1"/>
        <end position="55"/>
    </location>
</feature>
<feature type="chain" id="PRO_0000438012" description="Protein ORANGE, chloroplastic">
    <location>
        <begin position="56"/>
        <end position="307"/>
    </location>
</feature>
<feature type="transmembrane region" description="Helical" evidence="1">
    <location>
        <begin position="146"/>
        <end position="166"/>
    </location>
</feature>
<feature type="transmembrane region" description="Helical" evidence="1">
    <location>
        <begin position="199"/>
        <end position="219"/>
    </location>
</feature>
<feature type="repeat" description="CXXCXGXG motif" evidence="12">
    <location>
        <begin position="230"/>
        <end position="237"/>
    </location>
</feature>
<feature type="repeat" description="CXXCXXXG motif" evidence="12">
    <location>
        <begin position="241"/>
        <end position="248"/>
    </location>
</feature>
<feature type="repeat" description="CXXCXGXG motif" evidence="12">
    <location>
        <begin position="274"/>
        <end position="281"/>
    </location>
</feature>
<feature type="repeat" description="CXXCXXXG motif" evidence="12">
    <location>
        <begin position="285"/>
        <end position="292"/>
    </location>
</feature>
<feature type="region of interest" description="CR-type-like" evidence="12">
    <location>
        <begin position="208"/>
        <end position="299"/>
    </location>
</feature>
<feature type="cross-link" description="Glycyl lysine isopeptide (Lys-Gly) (interchain with G-Cter in ubiquitin)" evidence="8">
    <location>
        <position position="58"/>
    </location>
</feature>
<feature type="mutagenesis site" description="Disturbed nuclear localization leading to an accumulation in chloroplasts and a lost capability in repressing early light-induced proteins (ELIPs)." evidence="8">
    <original>K</original>
    <variation>A</variation>
    <location>
        <position position="58"/>
    </location>
</feature>
<feature type="mutagenesis site" description="No effect on the accumulation of carotenoids." evidence="5">
    <original>R</original>
    <variation>F</variation>
    <variation>K</variation>
    <location>
        <position position="90"/>
    </location>
</feature>
<feature type="mutagenesis site" description="Increased accumulation of carotenoids." evidence="5">
    <original>R</original>
    <variation>H</variation>
    <variation>A</variation>
    <location>
        <position position="90"/>
    </location>
</feature>
<sequence>MSSLGRILSVSYPPDPYTWRFSQYKLSSSLGRNRRLRWRFTALDPESSSLDSESSADKFASGFCIIEGPETVQDFAKMQLQEIQDNIRSRRNKIFLHMEEVRRLRIQQRIKNTELGIINEEQEHELPNFPSFIPFLPPLTAANLKVYYATCFSLIAGIILFGGLLAPTLELKLGIGGTSYADFIQSLHLPMQLSQVDPIVASFSGGAVGVISALMVVEVNNVKQQEHKRCKYCLGTGYLACARCSSTGALVLTEPVSAIAGGNHSLSPPKTERCSNCSGAGKVMCPTCLCTGMAMASEHDPRIDPFD</sequence>
<reference key="1">
    <citation type="submission" date="2011-02" db="EMBL/GenBank/DDBJ databases">
        <title>Cloning and functional characterization of Arabidopsis thalian Or gene.</title>
        <authorList>
            <person name="Zhu C."/>
            <person name="Capell T."/>
            <person name="Christou P."/>
        </authorList>
    </citation>
    <scope>NUCLEOTIDE SEQUENCE [MRNA]</scope>
    <source>
        <tissue>Leaf</tissue>
    </source>
</reference>
<reference key="2">
    <citation type="journal article" date="1998" name="DNA Res.">
        <title>Structural analysis of Arabidopsis thaliana chromosome 5. VI. Sequence features of the regions of 1,367,185 bp covered by 19 physically assigned P1 and TAC clones.</title>
        <authorList>
            <person name="Kotani H."/>
            <person name="Nakamura Y."/>
            <person name="Sato S."/>
            <person name="Asamizu E."/>
            <person name="Kaneko T."/>
            <person name="Miyajima N."/>
            <person name="Tabata S."/>
        </authorList>
    </citation>
    <scope>NUCLEOTIDE SEQUENCE [LARGE SCALE GENOMIC DNA]</scope>
    <source>
        <strain>cv. Columbia</strain>
    </source>
</reference>
<reference key="3">
    <citation type="journal article" date="2017" name="Plant J.">
        <title>Araport11: a complete reannotation of the Arabidopsis thaliana reference genome.</title>
        <authorList>
            <person name="Cheng C.Y."/>
            <person name="Krishnakumar V."/>
            <person name="Chan A.P."/>
            <person name="Thibaud-Nissen F."/>
            <person name="Schobel S."/>
            <person name="Town C.D."/>
        </authorList>
    </citation>
    <scope>GENOME REANNOTATION</scope>
    <source>
        <strain>cv. Columbia</strain>
    </source>
</reference>
<reference key="4">
    <citation type="journal article" date="2003" name="Science">
        <title>Empirical analysis of transcriptional activity in the Arabidopsis genome.</title>
        <authorList>
            <person name="Yamada K."/>
            <person name="Lim J."/>
            <person name="Dale J.M."/>
            <person name="Chen H."/>
            <person name="Shinn P."/>
            <person name="Palm C.J."/>
            <person name="Southwick A.M."/>
            <person name="Wu H.C."/>
            <person name="Kim C.J."/>
            <person name="Nguyen M."/>
            <person name="Pham P.K."/>
            <person name="Cheuk R.F."/>
            <person name="Karlin-Newmann G."/>
            <person name="Liu S.X."/>
            <person name="Lam B."/>
            <person name="Sakano H."/>
            <person name="Wu T."/>
            <person name="Yu G."/>
            <person name="Miranda M."/>
            <person name="Quach H.L."/>
            <person name="Tripp M."/>
            <person name="Chang C.H."/>
            <person name="Lee J.M."/>
            <person name="Toriumi M.J."/>
            <person name="Chan M.M."/>
            <person name="Tang C.C."/>
            <person name="Onodera C.S."/>
            <person name="Deng J.M."/>
            <person name="Akiyama K."/>
            <person name="Ansari Y."/>
            <person name="Arakawa T."/>
            <person name="Banh J."/>
            <person name="Banno F."/>
            <person name="Bowser L."/>
            <person name="Brooks S.Y."/>
            <person name="Carninci P."/>
            <person name="Chao Q."/>
            <person name="Choy N."/>
            <person name="Enju A."/>
            <person name="Goldsmith A.D."/>
            <person name="Gurjal M."/>
            <person name="Hansen N.F."/>
            <person name="Hayashizaki Y."/>
            <person name="Johnson-Hopson C."/>
            <person name="Hsuan V.W."/>
            <person name="Iida K."/>
            <person name="Karnes M."/>
            <person name="Khan S."/>
            <person name="Koesema E."/>
            <person name="Ishida J."/>
            <person name="Jiang P.X."/>
            <person name="Jones T."/>
            <person name="Kawai J."/>
            <person name="Kamiya A."/>
            <person name="Meyers C."/>
            <person name="Nakajima M."/>
            <person name="Narusaka M."/>
            <person name="Seki M."/>
            <person name="Sakurai T."/>
            <person name="Satou M."/>
            <person name="Tamse R."/>
            <person name="Vaysberg M."/>
            <person name="Wallender E.K."/>
            <person name="Wong C."/>
            <person name="Yamamura Y."/>
            <person name="Yuan S."/>
            <person name="Shinozaki K."/>
            <person name="Davis R.W."/>
            <person name="Theologis A."/>
            <person name="Ecker J.R."/>
        </authorList>
    </citation>
    <scope>NUCLEOTIDE SEQUENCE [LARGE SCALE MRNA]</scope>
    <source>
        <strain>cv. Columbia</strain>
    </source>
</reference>
<reference key="5">
    <citation type="submission" date="2002-03" db="EMBL/GenBank/DDBJ databases">
        <title>Full-length cDNA from Arabidopsis thaliana.</title>
        <authorList>
            <person name="Brover V.V."/>
            <person name="Troukhan M.E."/>
            <person name="Alexandrov N.A."/>
            <person name="Lu Y.-P."/>
            <person name="Flavell R.B."/>
            <person name="Feldmann K.A."/>
        </authorList>
    </citation>
    <scope>NUCLEOTIDE SEQUENCE [LARGE SCALE MRNA]</scope>
</reference>
<reference key="6">
    <citation type="journal article" date="2014" name="Plant J.">
        <title>An in vitro system for the rapid functional characterization of genes involved in carotenoid biosynthesis and accumulation.</title>
        <authorList>
            <person name="Bai C."/>
            <person name="Rivera S.M."/>
            <person name="Medina V."/>
            <person name="Alves R."/>
            <person name="Vilaprinyo E."/>
            <person name="Sorribas A."/>
            <person name="Canela R."/>
            <person name="Capell T."/>
            <person name="Sandmann G."/>
            <person name="Christou P."/>
            <person name="Zhu C."/>
        </authorList>
    </citation>
    <scope>FUNCTION</scope>
</reference>
<reference key="7">
    <citation type="journal article" date="2015" name="Plant Physiol.">
        <title>A single amino acid substitution in an ORANGE protein promotes carotenoid overaccumulation in Arabidopsis.</title>
        <authorList>
            <person name="Yuan H."/>
            <person name="Owsiany K."/>
            <person name="Sheeja T.E."/>
            <person name="Zhou X."/>
            <person name="Rodriguez C."/>
            <person name="Li Y."/>
            <person name="Welsch R."/>
            <person name="Chayut N."/>
            <person name="Yang Y."/>
            <person name="Thannhauser T.W."/>
            <person name="Parthasarathy M.V."/>
            <person name="Xu Q."/>
            <person name="Deng X."/>
            <person name="Fei Z."/>
            <person name="Schaffer A."/>
            <person name="Katzir N."/>
            <person name="Burger J."/>
            <person name="Tadmor Y."/>
            <person name="Li L."/>
        </authorList>
    </citation>
    <scope>FUNCTION</scope>
    <scope>INTERACTION WITH PSY1</scope>
    <scope>SUBCELLULAR LOCATION</scope>
    <scope>MUTAGENESIS OF ARG-90</scope>
</reference>
<reference key="8">
    <citation type="journal article" date="2015" name="Proc. Natl. Acad. Sci. U.S.A.">
        <title>Arabidopsis OR proteins are the major posttranscriptional regulators of phytoene synthase in controlling carotenoid biosynthesis.</title>
        <authorList>
            <person name="Zhou X."/>
            <person name="Welsch R."/>
            <person name="Yang Y."/>
            <person name="Alvarez D."/>
            <person name="Riediger M."/>
            <person name="Yuan H."/>
            <person name="Fish T."/>
            <person name="Liu J."/>
            <person name="Thannhauser T.W."/>
            <person name="Li L."/>
        </authorList>
    </citation>
    <scope>FUNCTION</scope>
    <scope>INTERACTION WITH PSY1</scope>
    <scope>SUBCELLULAR LOCATION</scope>
</reference>
<reference key="9">
    <citation type="journal article" date="2016" name="Plant Biotechnol. J.">
        <title>Bottlenecks in carotenoid biosynthesis and accumulation in rice endosperm are influenced by the precursor-product balance.</title>
        <authorList>
            <person name="Bai C."/>
            <person name="Capell T."/>
            <person name="Berman J."/>
            <person name="Medina V."/>
            <person name="Sandmann G."/>
            <person name="Christou P."/>
            <person name="Zhu C."/>
        </authorList>
    </citation>
    <scope>FUNCTION</scope>
</reference>
<reference key="10">
    <citation type="journal article" date="2016" name="Protoplasma">
        <title>The DnaJ-like zinc finger domain protein ORANGE localizes to the nucleus in etiolated cotyledons of Arabidopsis thaliana.</title>
        <authorList>
            <person name="Sun T.-H."/>
            <person name="Zhou F."/>
            <person name="Liu C.-J."/>
            <person name="Zhuang Z."/>
            <person name="Lu S."/>
        </authorList>
    </citation>
    <scope>SUBCELLULAR LOCATION</scope>
    <source>
        <strain>cv. Columbia</strain>
    </source>
</reference>
<reference key="11">
    <citation type="journal article" date="2019" name="Plant Cell">
        <title>ORANGE represses chloroplast biogenesis in etiolated Arabidopsis cotyledons via interaction with TCP14.</title>
        <authorList>
            <person name="Sun T."/>
            <person name="Zhou F."/>
            <person name="Huang X.-Q."/>
            <person name="Chen W.-C."/>
            <person name="Kong M.-J."/>
            <person name="Zhou C.-F."/>
            <person name="Zhuang Z."/>
            <person name="Li L."/>
            <person name="Lu S."/>
        </authorList>
    </citation>
    <scope>FUNCTION</scope>
    <scope>DISRUPTION PHENOTYPE</scope>
    <scope>INTERACTION WITH TCP14</scope>
    <scope>REPRESSION BY LIGHT</scope>
    <scope>INDUCTION BY TCP14</scope>
    <source>
        <strain>cv. Columbia</strain>
    </source>
</reference>
<reference key="12">
    <citation type="journal article" date="2021" name="Plant Signal. Behav.">
        <title>UBC19 is a new interacting protein of ORANGE for its nuclear localization in Arabidopsis thaliana.</title>
        <authorList>
            <person name="Chen W.-C."/>
            <person name="Wang Q."/>
            <person name="Cao T.-J."/>
            <person name="Lu S."/>
        </authorList>
    </citation>
    <scope>INTERACTION WITH UBC19</scope>
    <scope>UBIQUITINATION AT LYS-58</scope>
    <scope>MUTAGENESIS OF LYS-58</scope>
    <scope>SUBCELLULAR LOCATION</scope>
    <scope>IDENTIFICATION BY MASS SPECTROMETRY</scope>
    <source>
        <strain>cv. Columbia</strain>
    </source>
</reference>
<keyword id="KW-0150">Chloroplast</keyword>
<keyword id="KW-0963">Cytoplasm</keyword>
<keyword id="KW-1017">Isopeptide bond</keyword>
<keyword id="KW-0472">Membrane</keyword>
<keyword id="KW-0539">Nucleus</keyword>
<keyword id="KW-0934">Plastid</keyword>
<keyword id="KW-1185">Reference proteome</keyword>
<keyword id="KW-0677">Repeat</keyword>
<keyword id="KW-0809">Transit peptide</keyword>
<keyword id="KW-0812">Transmembrane</keyword>
<keyword id="KW-1133">Transmembrane helix</keyword>
<keyword id="KW-0832">Ubl conjugation</keyword>
<dbReference type="EMBL" id="JF304772">
    <property type="protein sequence ID" value="AEA35046.1"/>
    <property type="molecule type" value="mRNA"/>
</dbReference>
<dbReference type="EMBL" id="AB012239">
    <property type="protein sequence ID" value="BAB09011.1"/>
    <property type="molecule type" value="Genomic_DNA"/>
</dbReference>
<dbReference type="EMBL" id="CP002688">
    <property type="protein sequence ID" value="AED97503.1"/>
    <property type="molecule type" value="Genomic_DNA"/>
</dbReference>
<dbReference type="EMBL" id="CP002688">
    <property type="protein sequence ID" value="AED97504.1"/>
    <property type="molecule type" value="Genomic_DNA"/>
</dbReference>
<dbReference type="EMBL" id="AY065401">
    <property type="protein sequence ID" value="AAL38842.1"/>
    <property type="molecule type" value="mRNA"/>
</dbReference>
<dbReference type="EMBL" id="AY094431">
    <property type="protein sequence ID" value="AAM19804.1"/>
    <property type="molecule type" value="mRNA"/>
</dbReference>
<dbReference type="EMBL" id="AY117226">
    <property type="protein sequence ID" value="AAM51301.1"/>
    <property type="molecule type" value="mRNA"/>
</dbReference>
<dbReference type="EMBL" id="AY149953">
    <property type="protein sequence ID" value="AAN31107.1"/>
    <property type="molecule type" value="mRNA"/>
</dbReference>
<dbReference type="EMBL" id="AY084568">
    <property type="protein sequence ID" value="AAM61134.1"/>
    <property type="molecule type" value="mRNA"/>
</dbReference>
<dbReference type="RefSeq" id="NP_200975.1">
    <property type="nucleotide sequence ID" value="NM_125561.4"/>
</dbReference>
<dbReference type="RefSeq" id="NP_974975.1">
    <property type="nucleotide sequence ID" value="NM_203246.3"/>
</dbReference>
<dbReference type="FunCoup" id="Q9FKF4">
    <property type="interactions" value="598"/>
</dbReference>
<dbReference type="STRING" id="3702.Q9FKF4"/>
<dbReference type="iPTMnet" id="Q9FKF4"/>
<dbReference type="PaxDb" id="3702-AT5G61670.2"/>
<dbReference type="ProteomicsDB" id="248642"/>
<dbReference type="EnsemblPlants" id="AT5G61670.1">
    <property type="protein sequence ID" value="AT5G61670.1"/>
    <property type="gene ID" value="AT5G61670"/>
</dbReference>
<dbReference type="EnsemblPlants" id="AT5G61670.2">
    <property type="protein sequence ID" value="AT5G61670.2"/>
    <property type="gene ID" value="AT5G61670"/>
</dbReference>
<dbReference type="GeneID" id="836289"/>
<dbReference type="Gramene" id="AT5G61670.1">
    <property type="protein sequence ID" value="AT5G61670.1"/>
    <property type="gene ID" value="AT5G61670"/>
</dbReference>
<dbReference type="Gramene" id="AT5G61670.2">
    <property type="protein sequence ID" value="AT5G61670.2"/>
    <property type="gene ID" value="AT5G61670"/>
</dbReference>
<dbReference type="KEGG" id="ath:AT5G61670"/>
<dbReference type="Araport" id="AT5G61670"/>
<dbReference type="TAIR" id="AT5G61670">
    <property type="gene designation" value="ATOR"/>
</dbReference>
<dbReference type="eggNOG" id="ENOG502QVC3">
    <property type="taxonomic scope" value="Eukaryota"/>
</dbReference>
<dbReference type="HOGENOM" id="CLU_060054_0_0_1"/>
<dbReference type="InParanoid" id="Q9FKF4"/>
<dbReference type="OMA" id="NPAGFCI"/>
<dbReference type="OrthoDB" id="201720at2759"/>
<dbReference type="PhylomeDB" id="Q9FKF4"/>
<dbReference type="PRO" id="PR:Q9FKF4"/>
<dbReference type="Proteomes" id="UP000006548">
    <property type="component" value="Chromosome 5"/>
</dbReference>
<dbReference type="ExpressionAtlas" id="Q9FKF4">
    <property type="expression patterns" value="baseline and differential"/>
</dbReference>
<dbReference type="GO" id="GO:0009507">
    <property type="term" value="C:chloroplast"/>
    <property type="evidence" value="ECO:0000314"/>
    <property type="project" value="UniProtKB"/>
</dbReference>
<dbReference type="GO" id="GO:0031969">
    <property type="term" value="C:chloroplast membrane"/>
    <property type="evidence" value="ECO:0007669"/>
    <property type="project" value="UniProtKB-SubCell"/>
</dbReference>
<dbReference type="GO" id="GO:0005737">
    <property type="term" value="C:cytoplasm"/>
    <property type="evidence" value="ECO:0000314"/>
    <property type="project" value="UniProtKB"/>
</dbReference>
<dbReference type="GO" id="GO:0005634">
    <property type="term" value="C:nucleus"/>
    <property type="evidence" value="ECO:0000314"/>
    <property type="project" value="UniProtKB"/>
</dbReference>
<dbReference type="GO" id="GO:0009658">
    <property type="term" value="P:chloroplast organization"/>
    <property type="evidence" value="ECO:0000315"/>
    <property type="project" value="TAIR"/>
</dbReference>
<dbReference type="GO" id="GO:0009704">
    <property type="term" value="P:de-etiolation"/>
    <property type="evidence" value="ECO:0000315"/>
    <property type="project" value="UniProtKB"/>
</dbReference>
<dbReference type="GO" id="GO:1904143">
    <property type="term" value="P:positive regulation of carotenoid biosynthetic process"/>
    <property type="evidence" value="ECO:0000315"/>
    <property type="project" value="TAIR"/>
</dbReference>
<dbReference type="GO" id="GO:0050821">
    <property type="term" value="P:protein stabilization"/>
    <property type="evidence" value="ECO:0000315"/>
    <property type="project" value="TAIR"/>
</dbReference>
<dbReference type="GO" id="GO:0009416">
    <property type="term" value="P:response to light stimulus"/>
    <property type="evidence" value="ECO:0000270"/>
    <property type="project" value="UniProtKB"/>
</dbReference>
<dbReference type="PANTHER" id="PTHR15852">
    <property type="entry name" value="PLASTID TRANSCRIPTIONALLY ACTIVE PROTEIN"/>
    <property type="match status" value="1"/>
</dbReference>
<dbReference type="PANTHER" id="PTHR15852:SF74">
    <property type="entry name" value="PROTEIN ORANGE, CHLOROPLASTIC"/>
    <property type="match status" value="1"/>
</dbReference>
<evidence type="ECO:0000255" key="1"/>
<evidence type="ECO:0000269" key="2">
    <source>
    </source>
</evidence>
<evidence type="ECO:0000269" key="3">
    <source>
    </source>
</evidence>
<evidence type="ECO:0000269" key="4">
    <source>
    </source>
</evidence>
<evidence type="ECO:0000269" key="5">
    <source>
    </source>
</evidence>
<evidence type="ECO:0000269" key="6">
    <source>
    </source>
</evidence>
<evidence type="ECO:0000269" key="7">
    <source>
    </source>
</evidence>
<evidence type="ECO:0000269" key="8">
    <source>
    </source>
</evidence>
<evidence type="ECO:0000303" key="9">
    <source>
    </source>
</evidence>
<evidence type="ECO:0000303" key="10">
    <source>
    </source>
</evidence>
<evidence type="ECO:0000303" key="11">
    <source ref="1"/>
</evidence>
<evidence type="ECO:0000305" key="12"/>
<evidence type="ECO:0000305" key="13">
    <source>
    </source>
</evidence>
<evidence type="ECO:0000312" key="14">
    <source>
        <dbReference type="Araport" id="AT5G61670"/>
    </source>
</evidence>
<organism>
    <name type="scientific">Arabidopsis thaliana</name>
    <name type="common">Mouse-ear cress</name>
    <dbReference type="NCBI Taxonomy" id="3702"/>
    <lineage>
        <taxon>Eukaryota</taxon>
        <taxon>Viridiplantae</taxon>
        <taxon>Streptophyta</taxon>
        <taxon>Embryophyta</taxon>
        <taxon>Tracheophyta</taxon>
        <taxon>Spermatophyta</taxon>
        <taxon>Magnoliopsida</taxon>
        <taxon>eudicotyledons</taxon>
        <taxon>Gunneridae</taxon>
        <taxon>Pentapetalae</taxon>
        <taxon>rosids</taxon>
        <taxon>malvids</taxon>
        <taxon>Brassicales</taxon>
        <taxon>Brassicaceae</taxon>
        <taxon>Camelineae</taxon>
        <taxon>Arabidopsis</taxon>
    </lineage>
</organism>
<proteinExistence type="evidence at protein level"/>
<protein>
    <recommendedName>
        <fullName evidence="12">Protein ORANGE, chloroplastic</fullName>
        <shortName evidence="9">AtOR</shortName>
    </recommendedName>
    <alternativeName>
        <fullName evidence="12">DnaJ-like cysteine-rich domain-containing protein OR</fullName>
    </alternativeName>
</protein>
<gene>
    <name evidence="11" type="primary">OR</name>
    <name evidence="14" type="ordered locus">At5g61670</name>
</gene>
<name>ORANG_ARATH</name>